<comment type="function">
    <text evidence="1">Succinyl-CoA synthetase functions in the citric acid cycle (TCA), coupling the hydrolysis of succinyl-CoA to the synthesis of either ATP or GTP and thus represents the only step of substrate-level phosphorylation in the TCA. The beta subunit provides nucleotide specificity of the enzyme and binds the substrate succinate, while the binding sites for coenzyme A and phosphate are found in the alpha subunit.</text>
</comment>
<comment type="catalytic activity">
    <reaction evidence="1">
        <text>succinate + ATP + CoA = succinyl-CoA + ADP + phosphate</text>
        <dbReference type="Rhea" id="RHEA:17661"/>
        <dbReference type="ChEBI" id="CHEBI:30031"/>
        <dbReference type="ChEBI" id="CHEBI:30616"/>
        <dbReference type="ChEBI" id="CHEBI:43474"/>
        <dbReference type="ChEBI" id="CHEBI:57287"/>
        <dbReference type="ChEBI" id="CHEBI:57292"/>
        <dbReference type="ChEBI" id="CHEBI:456216"/>
        <dbReference type="EC" id="6.2.1.5"/>
    </reaction>
    <physiologicalReaction direction="right-to-left" evidence="1">
        <dbReference type="Rhea" id="RHEA:17663"/>
    </physiologicalReaction>
</comment>
<comment type="catalytic activity">
    <reaction evidence="1">
        <text>GTP + succinate + CoA = succinyl-CoA + GDP + phosphate</text>
        <dbReference type="Rhea" id="RHEA:22120"/>
        <dbReference type="ChEBI" id="CHEBI:30031"/>
        <dbReference type="ChEBI" id="CHEBI:37565"/>
        <dbReference type="ChEBI" id="CHEBI:43474"/>
        <dbReference type="ChEBI" id="CHEBI:57287"/>
        <dbReference type="ChEBI" id="CHEBI:57292"/>
        <dbReference type="ChEBI" id="CHEBI:58189"/>
    </reaction>
    <physiologicalReaction direction="right-to-left" evidence="1">
        <dbReference type="Rhea" id="RHEA:22122"/>
    </physiologicalReaction>
</comment>
<comment type="cofactor">
    <cofactor evidence="1">
        <name>Mg(2+)</name>
        <dbReference type="ChEBI" id="CHEBI:18420"/>
    </cofactor>
    <text evidence="1">Binds 1 Mg(2+) ion per subunit.</text>
</comment>
<comment type="pathway">
    <text evidence="1">Carbohydrate metabolism; tricarboxylic acid cycle; succinate from succinyl-CoA (ligase route): step 1/1.</text>
</comment>
<comment type="subunit">
    <text evidence="1">Heterotetramer of two alpha and two beta subunits.</text>
</comment>
<comment type="similarity">
    <text evidence="1">Belongs to the succinate/malate CoA ligase beta subunit family.</text>
</comment>
<keyword id="KW-0067">ATP-binding</keyword>
<keyword id="KW-0436">Ligase</keyword>
<keyword id="KW-0460">Magnesium</keyword>
<keyword id="KW-0479">Metal-binding</keyword>
<keyword id="KW-0547">Nucleotide-binding</keyword>
<keyword id="KW-0816">Tricarboxylic acid cycle</keyword>
<accession>B2UGE2</accession>
<sequence>MNIHEYQGKEILRKYNVPVPRGIPAFSVDEAIKAAETLGGPVWVVKAQIHAGGRGKGGGVKVAKSIEQVKEYASSILGMTLVTHQTGPEGKLVKRLLIEEGADIKKELYVSLVVDRVSQQVALMASSEGGMDIEEVAESHPEKIHTLLIDPQAGLQDAQADDIARKIGVPDASVPQARQALQGLYKAFWETDASQAEINPLILTGDGKVIALDAKFNFDSNALFRHPEIVAYRDLDEEDPAEIEASKFDLAYISLDGNIGCLVNGAGLAMATMDTIKLFGGEPANFLDVGGGATTEKVTEAFKLMLKNPDVKAILVNIFGGIMRCDVIAEGVIAAAKAVSLSVPLVVRMKGTNEDLGKKMLADSGLPIIAADTMAEAAEKVVAAAAGK</sequence>
<proteinExistence type="inferred from homology"/>
<dbReference type="EC" id="6.2.1.5" evidence="1"/>
<dbReference type="EMBL" id="CP001068">
    <property type="protein sequence ID" value="ACD25629.1"/>
    <property type="molecule type" value="Genomic_DNA"/>
</dbReference>
<dbReference type="SMR" id="B2UGE2"/>
<dbReference type="STRING" id="402626.Rpic_0474"/>
<dbReference type="KEGG" id="rpi:Rpic_0474"/>
<dbReference type="PATRIC" id="fig|402626.5.peg.1682"/>
<dbReference type="eggNOG" id="COG0045">
    <property type="taxonomic scope" value="Bacteria"/>
</dbReference>
<dbReference type="HOGENOM" id="CLU_037430_0_2_4"/>
<dbReference type="UniPathway" id="UPA00223">
    <property type="reaction ID" value="UER00999"/>
</dbReference>
<dbReference type="GO" id="GO:0005829">
    <property type="term" value="C:cytosol"/>
    <property type="evidence" value="ECO:0007669"/>
    <property type="project" value="TreeGrafter"/>
</dbReference>
<dbReference type="GO" id="GO:0042709">
    <property type="term" value="C:succinate-CoA ligase complex"/>
    <property type="evidence" value="ECO:0007669"/>
    <property type="project" value="TreeGrafter"/>
</dbReference>
<dbReference type="GO" id="GO:0005524">
    <property type="term" value="F:ATP binding"/>
    <property type="evidence" value="ECO:0007669"/>
    <property type="project" value="UniProtKB-UniRule"/>
</dbReference>
<dbReference type="GO" id="GO:0000287">
    <property type="term" value="F:magnesium ion binding"/>
    <property type="evidence" value="ECO:0007669"/>
    <property type="project" value="UniProtKB-UniRule"/>
</dbReference>
<dbReference type="GO" id="GO:0004775">
    <property type="term" value="F:succinate-CoA ligase (ADP-forming) activity"/>
    <property type="evidence" value="ECO:0007669"/>
    <property type="project" value="UniProtKB-UniRule"/>
</dbReference>
<dbReference type="GO" id="GO:0004776">
    <property type="term" value="F:succinate-CoA ligase (GDP-forming) activity"/>
    <property type="evidence" value="ECO:0007669"/>
    <property type="project" value="RHEA"/>
</dbReference>
<dbReference type="GO" id="GO:0006104">
    <property type="term" value="P:succinyl-CoA metabolic process"/>
    <property type="evidence" value="ECO:0007669"/>
    <property type="project" value="TreeGrafter"/>
</dbReference>
<dbReference type="GO" id="GO:0006099">
    <property type="term" value="P:tricarboxylic acid cycle"/>
    <property type="evidence" value="ECO:0007669"/>
    <property type="project" value="UniProtKB-UniRule"/>
</dbReference>
<dbReference type="FunFam" id="3.30.1490.20:FF:000002">
    <property type="entry name" value="Succinate--CoA ligase [ADP-forming] subunit beta"/>
    <property type="match status" value="1"/>
</dbReference>
<dbReference type="FunFam" id="3.30.470.20:FF:000002">
    <property type="entry name" value="Succinate--CoA ligase [ADP-forming] subunit beta"/>
    <property type="match status" value="1"/>
</dbReference>
<dbReference type="FunFam" id="3.40.50.261:FF:000001">
    <property type="entry name" value="Succinate--CoA ligase [ADP-forming] subunit beta"/>
    <property type="match status" value="1"/>
</dbReference>
<dbReference type="Gene3D" id="3.30.1490.20">
    <property type="entry name" value="ATP-grasp fold, A domain"/>
    <property type="match status" value="1"/>
</dbReference>
<dbReference type="Gene3D" id="3.30.470.20">
    <property type="entry name" value="ATP-grasp fold, B domain"/>
    <property type="match status" value="1"/>
</dbReference>
<dbReference type="Gene3D" id="3.40.50.261">
    <property type="entry name" value="Succinyl-CoA synthetase domains"/>
    <property type="match status" value="1"/>
</dbReference>
<dbReference type="HAMAP" id="MF_00558">
    <property type="entry name" value="Succ_CoA_beta"/>
    <property type="match status" value="1"/>
</dbReference>
<dbReference type="InterPro" id="IPR011761">
    <property type="entry name" value="ATP-grasp"/>
</dbReference>
<dbReference type="InterPro" id="IPR013650">
    <property type="entry name" value="ATP-grasp_succ-CoA_synth-type"/>
</dbReference>
<dbReference type="InterPro" id="IPR013815">
    <property type="entry name" value="ATP_grasp_subdomain_1"/>
</dbReference>
<dbReference type="InterPro" id="IPR017866">
    <property type="entry name" value="Succ-CoA_synthase_bsu_CS"/>
</dbReference>
<dbReference type="InterPro" id="IPR005811">
    <property type="entry name" value="SUCC_ACL_C"/>
</dbReference>
<dbReference type="InterPro" id="IPR005809">
    <property type="entry name" value="Succ_CoA_ligase-like_bsu"/>
</dbReference>
<dbReference type="InterPro" id="IPR016102">
    <property type="entry name" value="Succinyl-CoA_synth-like"/>
</dbReference>
<dbReference type="NCBIfam" id="NF001913">
    <property type="entry name" value="PRK00696.1"/>
    <property type="match status" value="1"/>
</dbReference>
<dbReference type="NCBIfam" id="TIGR01016">
    <property type="entry name" value="sucCoAbeta"/>
    <property type="match status" value="1"/>
</dbReference>
<dbReference type="PANTHER" id="PTHR11815:SF10">
    <property type="entry name" value="SUCCINATE--COA LIGASE [GDP-FORMING] SUBUNIT BETA, MITOCHONDRIAL"/>
    <property type="match status" value="1"/>
</dbReference>
<dbReference type="PANTHER" id="PTHR11815">
    <property type="entry name" value="SUCCINYL-COA SYNTHETASE BETA CHAIN"/>
    <property type="match status" value="1"/>
</dbReference>
<dbReference type="Pfam" id="PF08442">
    <property type="entry name" value="ATP-grasp_2"/>
    <property type="match status" value="1"/>
</dbReference>
<dbReference type="Pfam" id="PF00549">
    <property type="entry name" value="Ligase_CoA"/>
    <property type="match status" value="1"/>
</dbReference>
<dbReference type="PIRSF" id="PIRSF001554">
    <property type="entry name" value="SucCS_beta"/>
    <property type="match status" value="1"/>
</dbReference>
<dbReference type="SUPFAM" id="SSF56059">
    <property type="entry name" value="Glutathione synthetase ATP-binding domain-like"/>
    <property type="match status" value="1"/>
</dbReference>
<dbReference type="SUPFAM" id="SSF52210">
    <property type="entry name" value="Succinyl-CoA synthetase domains"/>
    <property type="match status" value="1"/>
</dbReference>
<dbReference type="PROSITE" id="PS50975">
    <property type="entry name" value="ATP_GRASP"/>
    <property type="match status" value="1"/>
</dbReference>
<dbReference type="PROSITE" id="PS01217">
    <property type="entry name" value="SUCCINYL_COA_LIG_3"/>
    <property type="match status" value="1"/>
</dbReference>
<name>SUCC_RALPJ</name>
<evidence type="ECO:0000255" key="1">
    <source>
        <dbReference type="HAMAP-Rule" id="MF_00558"/>
    </source>
</evidence>
<protein>
    <recommendedName>
        <fullName evidence="1">Succinate--CoA ligase [ADP-forming] subunit beta</fullName>
        <ecNumber evidence="1">6.2.1.5</ecNumber>
    </recommendedName>
    <alternativeName>
        <fullName evidence="1">Succinyl-CoA synthetase subunit beta</fullName>
        <shortName evidence="1">SCS-beta</shortName>
    </alternativeName>
</protein>
<feature type="chain" id="PRO_1000129215" description="Succinate--CoA ligase [ADP-forming] subunit beta">
    <location>
        <begin position="1"/>
        <end position="388"/>
    </location>
</feature>
<feature type="domain" description="ATP-grasp" evidence="1">
    <location>
        <begin position="9"/>
        <end position="244"/>
    </location>
</feature>
<feature type="binding site" evidence="1">
    <location>
        <position position="46"/>
    </location>
    <ligand>
        <name>ATP</name>
        <dbReference type="ChEBI" id="CHEBI:30616"/>
    </ligand>
</feature>
<feature type="binding site" evidence="1">
    <location>
        <begin position="53"/>
        <end position="55"/>
    </location>
    <ligand>
        <name>ATP</name>
        <dbReference type="ChEBI" id="CHEBI:30616"/>
    </ligand>
</feature>
<feature type="binding site" evidence="1">
    <location>
        <position position="99"/>
    </location>
    <ligand>
        <name>ATP</name>
        <dbReference type="ChEBI" id="CHEBI:30616"/>
    </ligand>
</feature>
<feature type="binding site" evidence="1">
    <location>
        <position position="102"/>
    </location>
    <ligand>
        <name>ATP</name>
        <dbReference type="ChEBI" id="CHEBI:30616"/>
    </ligand>
</feature>
<feature type="binding site" evidence="1">
    <location>
        <position position="107"/>
    </location>
    <ligand>
        <name>ATP</name>
        <dbReference type="ChEBI" id="CHEBI:30616"/>
    </ligand>
</feature>
<feature type="binding site" evidence="1">
    <location>
        <position position="199"/>
    </location>
    <ligand>
        <name>Mg(2+)</name>
        <dbReference type="ChEBI" id="CHEBI:18420"/>
    </ligand>
</feature>
<feature type="binding site" evidence="1">
    <location>
        <position position="213"/>
    </location>
    <ligand>
        <name>Mg(2+)</name>
        <dbReference type="ChEBI" id="CHEBI:18420"/>
    </ligand>
</feature>
<feature type="binding site" evidence="1">
    <location>
        <position position="264"/>
    </location>
    <ligand>
        <name>substrate</name>
        <note>ligand shared with subunit alpha</note>
    </ligand>
</feature>
<feature type="binding site" evidence="1">
    <location>
        <begin position="321"/>
        <end position="323"/>
    </location>
    <ligand>
        <name>substrate</name>
        <note>ligand shared with subunit alpha</note>
    </ligand>
</feature>
<organism>
    <name type="scientific">Ralstonia pickettii (strain 12J)</name>
    <dbReference type="NCBI Taxonomy" id="402626"/>
    <lineage>
        <taxon>Bacteria</taxon>
        <taxon>Pseudomonadati</taxon>
        <taxon>Pseudomonadota</taxon>
        <taxon>Betaproteobacteria</taxon>
        <taxon>Burkholderiales</taxon>
        <taxon>Burkholderiaceae</taxon>
        <taxon>Ralstonia</taxon>
    </lineage>
</organism>
<reference key="1">
    <citation type="submission" date="2008-05" db="EMBL/GenBank/DDBJ databases">
        <title>Complete sequence of chromosome 1 of Ralstonia pickettii 12J.</title>
        <authorList>
            <person name="Lucas S."/>
            <person name="Copeland A."/>
            <person name="Lapidus A."/>
            <person name="Glavina del Rio T."/>
            <person name="Dalin E."/>
            <person name="Tice H."/>
            <person name="Bruce D."/>
            <person name="Goodwin L."/>
            <person name="Pitluck S."/>
            <person name="Meincke L."/>
            <person name="Brettin T."/>
            <person name="Detter J.C."/>
            <person name="Han C."/>
            <person name="Kuske C.R."/>
            <person name="Schmutz J."/>
            <person name="Larimer F."/>
            <person name="Land M."/>
            <person name="Hauser L."/>
            <person name="Kyrpides N."/>
            <person name="Mikhailova N."/>
            <person name="Marsh T."/>
            <person name="Richardson P."/>
        </authorList>
    </citation>
    <scope>NUCLEOTIDE SEQUENCE [LARGE SCALE GENOMIC DNA]</scope>
    <source>
        <strain>12J</strain>
    </source>
</reference>
<gene>
    <name evidence="1" type="primary">sucC</name>
    <name type="ordered locus">Rpic_0474</name>
</gene>